<evidence type="ECO:0000250" key="1">
    <source>
        <dbReference type="UniProtKB" id="Q07915"/>
    </source>
</evidence>
<evidence type="ECO:0000250" key="2">
    <source>
        <dbReference type="UniProtKB" id="Q9UHA3"/>
    </source>
</evidence>
<evidence type="ECO:0000305" key="3"/>
<dbReference type="EMBL" id="BC062237">
    <property type="protein sequence ID" value="AAH62237.1"/>
    <property type="molecule type" value="mRNA"/>
</dbReference>
<dbReference type="RefSeq" id="NP_001014234.1">
    <property type="nucleotide sequence ID" value="NM_001014212.1"/>
</dbReference>
<dbReference type="SMR" id="Q6P6G7"/>
<dbReference type="FunCoup" id="Q6P6G7">
    <property type="interactions" value="3069"/>
</dbReference>
<dbReference type="STRING" id="10116.ENSRNOP00000068858"/>
<dbReference type="PhosphoSitePlus" id="Q6P6G7"/>
<dbReference type="PaxDb" id="10116-ENSRNOP00000010089"/>
<dbReference type="GeneID" id="363099"/>
<dbReference type="KEGG" id="rno:363099"/>
<dbReference type="UCSC" id="RGD:1309784">
    <property type="organism name" value="rat"/>
</dbReference>
<dbReference type="AGR" id="RGD:1309784"/>
<dbReference type="CTD" id="51187"/>
<dbReference type="RGD" id="1309784">
    <property type="gene designation" value="Rsl24d1"/>
</dbReference>
<dbReference type="eggNOG" id="KOG1723">
    <property type="taxonomic scope" value="Eukaryota"/>
</dbReference>
<dbReference type="InParanoid" id="Q6P6G7"/>
<dbReference type="PRO" id="PR:Q6P6G7"/>
<dbReference type="Proteomes" id="UP000002494">
    <property type="component" value="Unplaced"/>
</dbReference>
<dbReference type="GO" id="GO:0005730">
    <property type="term" value="C:nucleolus"/>
    <property type="evidence" value="ECO:0000318"/>
    <property type="project" value="GO_Central"/>
</dbReference>
<dbReference type="GO" id="GO:0003735">
    <property type="term" value="F:structural constituent of ribosome"/>
    <property type="evidence" value="ECO:0007669"/>
    <property type="project" value="InterPro"/>
</dbReference>
<dbReference type="GO" id="GO:0042273">
    <property type="term" value="P:ribosomal large subunit biogenesis"/>
    <property type="evidence" value="ECO:0000318"/>
    <property type="project" value="GO_Central"/>
</dbReference>
<dbReference type="CDD" id="cd00472">
    <property type="entry name" value="Ribosomal_L24e_L24"/>
    <property type="match status" value="1"/>
</dbReference>
<dbReference type="FunFam" id="2.30.170.20:FF:000001">
    <property type="entry name" value="probable ribosome biogenesis protein RLP24"/>
    <property type="match status" value="1"/>
</dbReference>
<dbReference type="Gene3D" id="2.30.170.20">
    <property type="entry name" value="Ribosomal protein L24e"/>
    <property type="match status" value="1"/>
</dbReference>
<dbReference type="HAMAP" id="MF_00773">
    <property type="entry name" value="Ribosomal_eL24"/>
    <property type="match status" value="1"/>
</dbReference>
<dbReference type="InterPro" id="IPR038630">
    <property type="entry name" value="L24e/L24_sf"/>
</dbReference>
<dbReference type="InterPro" id="IPR056366">
    <property type="entry name" value="Ribosomal_eL24"/>
</dbReference>
<dbReference type="InterPro" id="IPR055345">
    <property type="entry name" value="Ribosomal_eL24-rel_arc"/>
</dbReference>
<dbReference type="InterPro" id="IPR000988">
    <property type="entry name" value="Ribosomal_eL24-rel_N"/>
</dbReference>
<dbReference type="InterPro" id="IPR023442">
    <property type="entry name" value="Ribosomal_eL24_CS"/>
</dbReference>
<dbReference type="InterPro" id="IPR011017">
    <property type="entry name" value="TRASH_dom"/>
</dbReference>
<dbReference type="PANTHER" id="PTHR10792">
    <property type="entry name" value="60S RIBOSOMAL PROTEIN L24"/>
    <property type="match status" value="1"/>
</dbReference>
<dbReference type="PANTHER" id="PTHR10792:SF8">
    <property type="entry name" value="RIBOSOME BIOGENESIS PROTEIN RLP24-RELATED"/>
    <property type="match status" value="1"/>
</dbReference>
<dbReference type="Pfam" id="PF01246">
    <property type="entry name" value="Ribosomal_L24e"/>
    <property type="match status" value="1"/>
</dbReference>
<dbReference type="SMART" id="SM00746">
    <property type="entry name" value="TRASH"/>
    <property type="match status" value="1"/>
</dbReference>
<dbReference type="SUPFAM" id="SSF57716">
    <property type="entry name" value="Glucocorticoid receptor-like (DNA-binding domain)"/>
    <property type="match status" value="1"/>
</dbReference>
<dbReference type="PROSITE" id="PS01073">
    <property type="entry name" value="RIBOSOMAL_L24E"/>
    <property type="match status" value="1"/>
</dbReference>
<protein>
    <recommendedName>
        <fullName>Probable ribosome biogenesis protein RLP24</fullName>
    </recommendedName>
    <alternativeName>
        <fullName>Ribosomal L24 domain-containing protein 1</fullName>
    </alternativeName>
</protein>
<reference key="1">
    <citation type="journal article" date="2004" name="Genome Res.">
        <title>The status, quality, and expansion of the NIH full-length cDNA project: the Mammalian Gene Collection (MGC).</title>
        <authorList>
            <consortium name="The MGC Project Team"/>
        </authorList>
    </citation>
    <scope>NUCLEOTIDE SEQUENCE [LARGE SCALE MRNA]</scope>
    <source>
        <tissue>Pituitary</tissue>
    </source>
</reference>
<gene>
    <name type="primary">Rsl24d1</name>
</gene>
<keyword id="KW-0539">Nucleus</keyword>
<keyword id="KW-1185">Reference proteome</keyword>
<keyword id="KW-0690">Ribosome biogenesis</keyword>
<name>RLP24_RAT</name>
<feature type="chain" id="PRO_0000136898" description="Probable ribosome biogenesis protein RLP24">
    <location>
        <begin position="1"/>
        <end position="163"/>
    </location>
</feature>
<accession>Q6P6G7</accession>
<comment type="function">
    <text evidence="1">Involved in the biogenesis of the 60S ribosomal subunit. Ensures the docking of GTPBP4/NOG1 to pre-60S particles (By similarity).</text>
</comment>
<comment type="subunit">
    <text evidence="1 2">Associated with nucleolar and cytoplasmic pre-60S particles (By similarity). At the end of biogenesis it dissociates from cytoplasmic pre-60S particles and is likely to be exchanged for its ribosomal homolog, RPL24 (By similarity).</text>
</comment>
<comment type="subcellular location">
    <subcellularLocation>
        <location evidence="2">Nucleus</location>
        <location evidence="2">Nucleolus</location>
    </subcellularLocation>
</comment>
<comment type="similarity">
    <text evidence="3">Belongs to the eukaryotic ribosomal protein eL24 family.</text>
</comment>
<sequence length="163" mass="19653">MRIEKCYFCSGPIYPGHGMMFVRNDCKVFRFCKSKCHKNFKKKRNPRKVRWTKAFRKAAGKELTVDNSFEFEKRRNEPVKYQRELWNKTIDAMKRVEEIKQRRQAKFIMNRLKKNKELQKVQDIREVKQNIHLIRAPLAGKGKQLEEKMVQQLQEDVDMEDAS</sequence>
<proteinExistence type="evidence at transcript level"/>
<organism>
    <name type="scientific">Rattus norvegicus</name>
    <name type="common">Rat</name>
    <dbReference type="NCBI Taxonomy" id="10116"/>
    <lineage>
        <taxon>Eukaryota</taxon>
        <taxon>Metazoa</taxon>
        <taxon>Chordata</taxon>
        <taxon>Craniata</taxon>
        <taxon>Vertebrata</taxon>
        <taxon>Euteleostomi</taxon>
        <taxon>Mammalia</taxon>
        <taxon>Eutheria</taxon>
        <taxon>Euarchontoglires</taxon>
        <taxon>Glires</taxon>
        <taxon>Rodentia</taxon>
        <taxon>Myomorpha</taxon>
        <taxon>Muroidea</taxon>
        <taxon>Muridae</taxon>
        <taxon>Murinae</taxon>
        <taxon>Rattus</taxon>
    </lineage>
</organism>